<accession>Q6DD45</accession>
<reference key="1">
    <citation type="submission" date="2002-12" db="EMBL/GenBank/DDBJ databases">
        <authorList>
            <consortium name="NIH - Xenopus Gene Collection (XGC) project"/>
        </authorList>
    </citation>
    <scope>NUCLEOTIDE SEQUENCE [LARGE SCALE MRNA]</scope>
    <source>
        <tissue>Embryo</tissue>
    </source>
</reference>
<dbReference type="EMBL" id="BC077784">
    <property type="protein sequence ID" value="AAH77784.1"/>
    <property type="molecule type" value="mRNA"/>
</dbReference>
<dbReference type="RefSeq" id="NP_001086929.1">
    <property type="nucleotide sequence ID" value="NM_001093460.1"/>
</dbReference>
<dbReference type="SMR" id="Q6DD45"/>
<dbReference type="GeneID" id="446764"/>
<dbReference type="KEGG" id="xla:446764"/>
<dbReference type="AGR" id="Xenbase:XB-GENE-977405"/>
<dbReference type="CTD" id="446764"/>
<dbReference type="Xenbase" id="XB-GENE-977405">
    <property type="gene designation" value="zcchc8.L"/>
</dbReference>
<dbReference type="OrthoDB" id="8026949at2759"/>
<dbReference type="Proteomes" id="UP000186698">
    <property type="component" value="Chromosome 1L"/>
</dbReference>
<dbReference type="Bgee" id="446764">
    <property type="expression patterns" value="Expressed in blastula and 19 other cell types or tissues"/>
</dbReference>
<dbReference type="GO" id="GO:0071013">
    <property type="term" value="C:catalytic step 2 spliceosome"/>
    <property type="evidence" value="ECO:0000318"/>
    <property type="project" value="GO_Central"/>
</dbReference>
<dbReference type="GO" id="GO:0005654">
    <property type="term" value="C:nucleoplasm"/>
    <property type="evidence" value="ECO:0000250"/>
    <property type="project" value="UniProtKB"/>
</dbReference>
<dbReference type="GO" id="GO:0003723">
    <property type="term" value="F:RNA binding"/>
    <property type="evidence" value="ECO:0000318"/>
    <property type="project" value="GO_Central"/>
</dbReference>
<dbReference type="GO" id="GO:0008270">
    <property type="term" value="F:zinc ion binding"/>
    <property type="evidence" value="ECO:0007669"/>
    <property type="project" value="UniProtKB-KW"/>
</dbReference>
<dbReference type="GO" id="GO:0031124">
    <property type="term" value="P:mRNA 3'-end processing"/>
    <property type="evidence" value="ECO:0000250"/>
    <property type="project" value="UniProtKB"/>
</dbReference>
<dbReference type="GO" id="GO:0006396">
    <property type="term" value="P:RNA processing"/>
    <property type="evidence" value="ECO:0000318"/>
    <property type="project" value="GO_Central"/>
</dbReference>
<dbReference type="Gene3D" id="4.10.60.10">
    <property type="entry name" value="Zinc finger, CCHC-type"/>
    <property type="match status" value="1"/>
</dbReference>
<dbReference type="InterPro" id="IPR052115">
    <property type="entry name" value="NEXT_complex_subunit_ZCCHC8"/>
</dbReference>
<dbReference type="InterPro" id="IPR006568">
    <property type="entry name" value="PSP_pro-rich"/>
</dbReference>
<dbReference type="InterPro" id="IPR001878">
    <property type="entry name" value="Znf_CCHC"/>
</dbReference>
<dbReference type="InterPro" id="IPR036875">
    <property type="entry name" value="Znf_CCHC_sf"/>
</dbReference>
<dbReference type="PANTHER" id="PTHR13316:SF0">
    <property type="entry name" value="ZINC FINGER CCHC DOMAIN-CONTAINING PROTEIN 8"/>
    <property type="match status" value="1"/>
</dbReference>
<dbReference type="PANTHER" id="PTHR13316">
    <property type="entry name" value="ZINC FINGER, CCHC DOMAIN CONTAINING 8"/>
    <property type="match status" value="1"/>
</dbReference>
<dbReference type="Pfam" id="PF04046">
    <property type="entry name" value="PSP"/>
    <property type="match status" value="1"/>
</dbReference>
<dbReference type="Pfam" id="PF00098">
    <property type="entry name" value="zf-CCHC"/>
    <property type="match status" value="1"/>
</dbReference>
<dbReference type="SMART" id="SM00581">
    <property type="entry name" value="PSP"/>
    <property type="match status" value="1"/>
</dbReference>
<dbReference type="SMART" id="SM00343">
    <property type="entry name" value="ZnF_C2HC"/>
    <property type="match status" value="1"/>
</dbReference>
<dbReference type="SUPFAM" id="SSF57756">
    <property type="entry name" value="Retrovirus zinc finger-like domains"/>
    <property type="match status" value="1"/>
</dbReference>
<dbReference type="PROSITE" id="PS50158">
    <property type="entry name" value="ZF_CCHC"/>
    <property type="match status" value="1"/>
</dbReference>
<organism>
    <name type="scientific">Xenopus laevis</name>
    <name type="common">African clawed frog</name>
    <dbReference type="NCBI Taxonomy" id="8355"/>
    <lineage>
        <taxon>Eukaryota</taxon>
        <taxon>Metazoa</taxon>
        <taxon>Chordata</taxon>
        <taxon>Craniata</taxon>
        <taxon>Vertebrata</taxon>
        <taxon>Euteleostomi</taxon>
        <taxon>Amphibia</taxon>
        <taxon>Batrachia</taxon>
        <taxon>Anura</taxon>
        <taxon>Pipoidea</taxon>
        <taxon>Pipidae</taxon>
        <taxon>Xenopodinae</taxon>
        <taxon>Xenopus</taxon>
        <taxon>Xenopus</taxon>
    </lineage>
</organism>
<proteinExistence type="evidence at transcript level"/>
<comment type="function">
    <text evidence="1">Scaffolding subunit of the trimeric nuclear exosome targeting (NEXT) complex that is involved in the surveillance and turnover of aberrant transcripts and non-coding RNAs. NEXT functions as an RNA exosome cofactor that directs a subset of non-coding short-lived RNAs for exosomal degradation. May be involved in pre-mRNA splicing. It is required for 3'-end maturation of telomerase RNA component (TERC), TERC 3'-end targeting to the nuclear RNA exosome, and for telomerase function.</text>
</comment>
<comment type="subcellular location">
    <subcellularLocation>
        <location evidence="1">Nucleus</location>
        <location evidence="1">Nucleoplasm</location>
    </subcellularLocation>
    <text evidence="1">Excluded from nucleolus.</text>
</comment>
<comment type="similarity">
    <text evidence="5">Belongs to the ZCCHC8 family.</text>
</comment>
<name>ZCHC8_XENLA</name>
<keyword id="KW-0175">Coiled coil</keyword>
<keyword id="KW-0479">Metal-binding</keyword>
<keyword id="KW-0539">Nucleus</keyword>
<keyword id="KW-1185">Reference proteome</keyword>
<keyword id="KW-0862">Zinc</keyword>
<keyword id="KW-0863">Zinc-finger</keyword>
<protein>
    <recommendedName>
        <fullName>Zinc finger CCHC domain-containing protein 8</fullName>
    </recommendedName>
    <alternativeName>
        <fullName>TRAMP-like complex RNA-binding factor ZCCHC8</fullName>
    </alternativeName>
</protein>
<sequence length="743" mass="82944">MAEVDFGDTELFEQLDGDLPASSVHVRFDSEGEANDVQELVSQHEETINRLSAENQELKRRLSLLNRPSGLPVEDKLDGPLLQILFMNHIISKQYHQEIEEFITSLFQKYEEHRKSNSEKTSFNIKPQPSSILLEENDDSDADTMKNIKQAFSVVGSVQYFKNFCLDKLGQPLLNENPQLTEGWDIPKYQQVFTQIVSLDGQEIQVKAKRPKPCCFNCGSEEHQMRDCPKPRDQAHINMKRKEFLDACGEAGNQNQQRYHAEEVEERFGKYKPGVISEELQEALGIMDKNLPPFIYRMRELGYPPGWLKEAELENSGLSLYDGKERLDASDGEIEDRDTEAKKHVSYDVSKLVNYPGFNISAPPDMFDEWQMFGSIPMQQAHQKDIFANYLTDSFPPGSSNKSNKRSSCQSSSSERKRQKTSGNHTVTSAVMDMDMESDEDMYHSRASKGYMFHPPLPPGSPSYGTPPPLPRGTPPSTPPNFIPPPPPTPTPPPLPKGTPPPTPNRDSPKVPPQVLDEDTWTLEELEEKQRLLWAQLDNGESTNSDCDAHTPITVSSVTSSPSRTELDIATGRKAAPRQTAHELKSPCVITKLFVAEPEEGGPLIPEEGGPLIPEEGGPLIPEEGGPLIPEEGGPLIPEEDSETNEDSNECYVVEGNDIEVNKLSSKHENASEKNPSDEDATEEAACVEPSPKRSGVPDVSKFAEGITPFEYDNMSDSTGVYLRLRGLLKNSPRNVQKSKKQV</sequence>
<evidence type="ECO:0000250" key="1">
    <source>
        <dbReference type="UniProtKB" id="Q6NZY4"/>
    </source>
</evidence>
<evidence type="ECO:0000255" key="2"/>
<evidence type="ECO:0000255" key="3">
    <source>
        <dbReference type="PROSITE-ProRule" id="PRU00047"/>
    </source>
</evidence>
<evidence type="ECO:0000256" key="4">
    <source>
        <dbReference type="SAM" id="MobiDB-lite"/>
    </source>
</evidence>
<evidence type="ECO:0000305" key="5"/>
<feature type="chain" id="PRO_0000150964" description="Zinc finger CCHC domain-containing protein 8">
    <location>
        <begin position="1"/>
        <end position="743"/>
    </location>
</feature>
<feature type="zinc finger region" description="CCHC-type" evidence="3">
    <location>
        <begin position="213"/>
        <end position="230"/>
    </location>
</feature>
<feature type="region of interest" description="Disordered" evidence="4">
    <location>
        <begin position="390"/>
        <end position="432"/>
    </location>
</feature>
<feature type="region of interest" description="Disordered" evidence="4">
    <location>
        <begin position="449"/>
        <end position="518"/>
    </location>
</feature>
<feature type="region of interest" description="Disordered" evidence="4">
    <location>
        <begin position="540"/>
        <end position="566"/>
    </location>
</feature>
<feature type="region of interest" description="Disordered" evidence="4">
    <location>
        <begin position="600"/>
        <end position="649"/>
    </location>
</feature>
<feature type="region of interest" description="Disordered" evidence="4">
    <location>
        <begin position="662"/>
        <end position="700"/>
    </location>
</feature>
<feature type="coiled-coil region" evidence="2">
    <location>
        <begin position="29"/>
        <end position="67"/>
    </location>
</feature>
<feature type="compositionally biased region" description="Low complexity" evidence="4">
    <location>
        <begin position="399"/>
        <end position="413"/>
    </location>
</feature>
<feature type="compositionally biased region" description="Pro residues" evidence="4">
    <location>
        <begin position="455"/>
        <end position="504"/>
    </location>
</feature>
<feature type="compositionally biased region" description="Low complexity" evidence="4">
    <location>
        <begin position="551"/>
        <end position="564"/>
    </location>
</feature>
<feature type="compositionally biased region" description="Low complexity" evidence="4">
    <location>
        <begin position="601"/>
        <end position="637"/>
    </location>
</feature>
<feature type="compositionally biased region" description="Acidic residues" evidence="4">
    <location>
        <begin position="638"/>
        <end position="649"/>
    </location>
</feature>
<feature type="compositionally biased region" description="Basic and acidic residues" evidence="4">
    <location>
        <begin position="666"/>
        <end position="677"/>
    </location>
</feature>
<gene>
    <name type="primary">zcchc8</name>
</gene>